<protein>
    <recommendedName>
        <fullName evidence="1">Peptide deformylase</fullName>
        <shortName evidence="1">PDF</shortName>
        <ecNumber evidence="1">3.5.1.88</ecNumber>
    </recommendedName>
    <alternativeName>
        <fullName evidence="1">Polypeptide deformylase</fullName>
    </alternativeName>
</protein>
<reference key="1">
    <citation type="journal article" date="2005" name="Nat. Biotechnol.">
        <title>Genome sequence of the chlorinated compound-respiring bacterium Dehalococcoides species strain CBDB1.</title>
        <authorList>
            <person name="Kube M."/>
            <person name="Beck A."/>
            <person name="Zinder S.H."/>
            <person name="Kuhl H."/>
            <person name="Reinhardt R."/>
            <person name="Adrian L."/>
        </authorList>
    </citation>
    <scope>NUCLEOTIDE SEQUENCE [LARGE SCALE GENOMIC DNA]</scope>
    <source>
        <strain>CBDB1</strain>
    </source>
</reference>
<comment type="function">
    <text evidence="1">Removes the formyl group from the N-terminal Met of newly synthesized proteins. Requires at least a dipeptide for an efficient rate of reaction. N-terminal L-methionine is a prerequisite for activity but the enzyme has broad specificity at other positions.</text>
</comment>
<comment type="catalytic activity">
    <reaction evidence="1">
        <text>N-terminal N-formyl-L-methionyl-[peptide] + H2O = N-terminal L-methionyl-[peptide] + formate</text>
        <dbReference type="Rhea" id="RHEA:24420"/>
        <dbReference type="Rhea" id="RHEA-COMP:10639"/>
        <dbReference type="Rhea" id="RHEA-COMP:10640"/>
        <dbReference type="ChEBI" id="CHEBI:15377"/>
        <dbReference type="ChEBI" id="CHEBI:15740"/>
        <dbReference type="ChEBI" id="CHEBI:49298"/>
        <dbReference type="ChEBI" id="CHEBI:64731"/>
        <dbReference type="EC" id="3.5.1.88"/>
    </reaction>
</comment>
<comment type="cofactor">
    <cofactor evidence="1">
        <name>Fe(2+)</name>
        <dbReference type="ChEBI" id="CHEBI:29033"/>
    </cofactor>
    <text evidence="1">Binds 1 Fe(2+) ion.</text>
</comment>
<comment type="similarity">
    <text evidence="1">Belongs to the polypeptide deformylase family.</text>
</comment>
<name>DEF_DEHMC</name>
<accession>Q3ZXA9</accession>
<organism>
    <name type="scientific">Dehalococcoides mccartyi (strain CBDB1)</name>
    <dbReference type="NCBI Taxonomy" id="255470"/>
    <lineage>
        <taxon>Bacteria</taxon>
        <taxon>Bacillati</taxon>
        <taxon>Chloroflexota</taxon>
        <taxon>Dehalococcoidia</taxon>
        <taxon>Dehalococcoidales</taxon>
        <taxon>Dehalococcoidaceae</taxon>
        <taxon>Dehalococcoides</taxon>
    </lineage>
</organism>
<dbReference type="EC" id="3.5.1.88" evidence="1"/>
<dbReference type="EMBL" id="AJ965256">
    <property type="protein sequence ID" value="CAI82894.1"/>
    <property type="molecule type" value="Genomic_DNA"/>
</dbReference>
<dbReference type="RefSeq" id="WP_011309245.1">
    <property type="nucleotide sequence ID" value="NC_007356.1"/>
</dbReference>
<dbReference type="SMR" id="Q3ZXA9"/>
<dbReference type="KEGG" id="deh:cbdbA733"/>
<dbReference type="HOGENOM" id="CLU_061901_2_1_0"/>
<dbReference type="Proteomes" id="UP000000433">
    <property type="component" value="Chromosome"/>
</dbReference>
<dbReference type="GO" id="GO:0046872">
    <property type="term" value="F:metal ion binding"/>
    <property type="evidence" value="ECO:0007669"/>
    <property type="project" value="UniProtKB-KW"/>
</dbReference>
<dbReference type="GO" id="GO:0042586">
    <property type="term" value="F:peptide deformylase activity"/>
    <property type="evidence" value="ECO:0007669"/>
    <property type="project" value="UniProtKB-UniRule"/>
</dbReference>
<dbReference type="GO" id="GO:0043686">
    <property type="term" value="P:co-translational protein modification"/>
    <property type="evidence" value="ECO:0007669"/>
    <property type="project" value="TreeGrafter"/>
</dbReference>
<dbReference type="GO" id="GO:0006412">
    <property type="term" value="P:translation"/>
    <property type="evidence" value="ECO:0007669"/>
    <property type="project" value="UniProtKB-UniRule"/>
</dbReference>
<dbReference type="CDD" id="cd00487">
    <property type="entry name" value="Pep_deformylase"/>
    <property type="match status" value="1"/>
</dbReference>
<dbReference type="Gene3D" id="3.90.45.10">
    <property type="entry name" value="Peptide deformylase"/>
    <property type="match status" value="1"/>
</dbReference>
<dbReference type="HAMAP" id="MF_00163">
    <property type="entry name" value="Pep_deformylase"/>
    <property type="match status" value="1"/>
</dbReference>
<dbReference type="InterPro" id="IPR023635">
    <property type="entry name" value="Peptide_deformylase"/>
</dbReference>
<dbReference type="InterPro" id="IPR036821">
    <property type="entry name" value="Peptide_deformylase_sf"/>
</dbReference>
<dbReference type="NCBIfam" id="TIGR00079">
    <property type="entry name" value="pept_deformyl"/>
    <property type="match status" value="1"/>
</dbReference>
<dbReference type="NCBIfam" id="NF001159">
    <property type="entry name" value="PRK00150.1-3"/>
    <property type="match status" value="1"/>
</dbReference>
<dbReference type="PANTHER" id="PTHR10458">
    <property type="entry name" value="PEPTIDE DEFORMYLASE"/>
    <property type="match status" value="1"/>
</dbReference>
<dbReference type="PANTHER" id="PTHR10458:SF22">
    <property type="entry name" value="PEPTIDE DEFORMYLASE"/>
    <property type="match status" value="1"/>
</dbReference>
<dbReference type="Pfam" id="PF01327">
    <property type="entry name" value="Pep_deformylase"/>
    <property type="match status" value="1"/>
</dbReference>
<dbReference type="PIRSF" id="PIRSF004749">
    <property type="entry name" value="Pep_def"/>
    <property type="match status" value="1"/>
</dbReference>
<dbReference type="PRINTS" id="PR01576">
    <property type="entry name" value="PDEFORMYLASE"/>
</dbReference>
<dbReference type="SUPFAM" id="SSF56420">
    <property type="entry name" value="Peptide deformylase"/>
    <property type="match status" value="1"/>
</dbReference>
<proteinExistence type="inferred from homology"/>
<keyword id="KW-0378">Hydrolase</keyword>
<keyword id="KW-0408">Iron</keyword>
<keyword id="KW-0479">Metal-binding</keyword>
<keyword id="KW-0648">Protein biosynthesis</keyword>
<feature type="chain" id="PRO_0000301024" description="Peptide deformylase">
    <location>
        <begin position="1"/>
        <end position="167"/>
    </location>
</feature>
<feature type="active site" evidence="1">
    <location>
        <position position="133"/>
    </location>
</feature>
<feature type="binding site" evidence="1">
    <location>
        <position position="90"/>
    </location>
    <ligand>
        <name>Fe cation</name>
        <dbReference type="ChEBI" id="CHEBI:24875"/>
    </ligand>
</feature>
<feature type="binding site" evidence="1">
    <location>
        <position position="132"/>
    </location>
    <ligand>
        <name>Fe cation</name>
        <dbReference type="ChEBI" id="CHEBI:24875"/>
    </ligand>
</feature>
<feature type="binding site" evidence="1">
    <location>
        <position position="136"/>
    </location>
    <ligand>
        <name>Fe cation</name>
        <dbReference type="ChEBI" id="CHEBI:24875"/>
    </ligand>
</feature>
<evidence type="ECO:0000255" key="1">
    <source>
        <dbReference type="HAMAP-Rule" id="MF_00163"/>
    </source>
</evidence>
<sequence>MAIRRICELPEPVLRKKAKKVPSIDGSIQTLIDDMIETMNSADGAGLAAPQVGVSLRLVVFREPDTKEATVLINPEIVKKEGQRQVTEGCLSIPGYFGELTRAETVTAKGLDRHGKACRIKGTGIVAQLLEHETEHLDGILYIDHLESEDQLHEIGPDDEMPEEIRE</sequence>
<gene>
    <name evidence="1" type="primary">def</name>
    <name type="ordered locus">cbdbA733</name>
</gene>